<protein>
    <recommendedName>
        <fullName evidence="1">Putative manganese efflux pump MntP</fullName>
    </recommendedName>
</protein>
<accession>Q4KDD4</accession>
<comment type="function">
    <text evidence="1">Probably functions as a manganese efflux pump.</text>
</comment>
<comment type="subcellular location">
    <subcellularLocation>
        <location evidence="1">Cell inner membrane</location>
        <topology evidence="1">Multi-pass membrane protein</topology>
    </subcellularLocation>
</comment>
<comment type="similarity">
    <text evidence="1">Belongs to the MntP (TC 9.B.29) family.</text>
</comment>
<proteinExistence type="inferred from homology"/>
<evidence type="ECO:0000255" key="1">
    <source>
        <dbReference type="HAMAP-Rule" id="MF_01521"/>
    </source>
</evidence>
<gene>
    <name evidence="1" type="primary">mntP</name>
    <name type="ordered locus">PFL_2642</name>
</gene>
<organism>
    <name type="scientific">Pseudomonas fluorescens (strain ATCC BAA-477 / NRRL B-23932 / Pf-5)</name>
    <dbReference type="NCBI Taxonomy" id="220664"/>
    <lineage>
        <taxon>Bacteria</taxon>
        <taxon>Pseudomonadati</taxon>
        <taxon>Pseudomonadota</taxon>
        <taxon>Gammaproteobacteria</taxon>
        <taxon>Pseudomonadales</taxon>
        <taxon>Pseudomonadaceae</taxon>
        <taxon>Pseudomonas</taxon>
    </lineage>
</organism>
<dbReference type="EMBL" id="CP000076">
    <property type="protein sequence ID" value="AAY91915.1"/>
    <property type="molecule type" value="Genomic_DNA"/>
</dbReference>
<dbReference type="RefSeq" id="WP_011060938.1">
    <property type="nucleotide sequence ID" value="NC_004129.6"/>
</dbReference>
<dbReference type="STRING" id="220664.PFL_2642"/>
<dbReference type="KEGG" id="pfl:PFL_2642"/>
<dbReference type="PATRIC" id="fig|220664.5.peg.2693"/>
<dbReference type="eggNOG" id="COG1971">
    <property type="taxonomic scope" value="Bacteria"/>
</dbReference>
<dbReference type="HOGENOM" id="CLU_096410_0_0_6"/>
<dbReference type="Proteomes" id="UP000008540">
    <property type="component" value="Chromosome"/>
</dbReference>
<dbReference type="GO" id="GO:0005886">
    <property type="term" value="C:plasma membrane"/>
    <property type="evidence" value="ECO:0007669"/>
    <property type="project" value="UniProtKB-SubCell"/>
</dbReference>
<dbReference type="GO" id="GO:0005384">
    <property type="term" value="F:manganese ion transmembrane transporter activity"/>
    <property type="evidence" value="ECO:0007669"/>
    <property type="project" value="UniProtKB-UniRule"/>
</dbReference>
<dbReference type="HAMAP" id="MF_01521">
    <property type="entry name" value="MntP_pump"/>
    <property type="match status" value="1"/>
</dbReference>
<dbReference type="InterPro" id="IPR003810">
    <property type="entry name" value="Mntp/YtaF"/>
</dbReference>
<dbReference type="InterPro" id="IPR022929">
    <property type="entry name" value="Put_MntP"/>
</dbReference>
<dbReference type="NCBIfam" id="NF008546">
    <property type="entry name" value="PRK11469.1"/>
    <property type="match status" value="1"/>
</dbReference>
<dbReference type="PANTHER" id="PTHR35529">
    <property type="entry name" value="MANGANESE EFFLUX PUMP MNTP-RELATED"/>
    <property type="match status" value="1"/>
</dbReference>
<dbReference type="PANTHER" id="PTHR35529:SF1">
    <property type="entry name" value="MANGANESE EFFLUX PUMP MNTP-RELATED"/>
    <property type="match status" value="1"/>
</dbReference>
<dbReference type="Pfam" id="PF02659">
    <property type="entry name" value="Mntp"/>
    <property type="match status" value="1"/>
</dbReference>
<reference key="1">
    <citation type="journal article" date="2005" name="Nat. Biotechnol.">
        <title>Complete genome sequence of the plant commensal Pseudomonas fluorescens Pf-5.</title>
        <authorList>
            <person name="Paulsen I.T."/>
            <person name="Press C.M."/>
            <person name="Ravel J."/>
            <person name="Kobayashi D.Y."/>
            <person name="Myers G.S.A."/>
            <person name="Mavrodi D.V."/>
            <person name="DeBoy R.T."/>
            <person name="Seshadri R."/>
            <person name="Ren Q."/>
            <person name="Madupu R."/>
            <person name="Dodson R.J."/>
            <person name="Durkin A.S."/>
            <person name="Brinkac L.M."/>
            <person name="Daugherty S.C."/>
            <person name="Sullivan S.A."/>
            <person name="Rosovitz M.J."/>
            <person name="Gwinn M.L."/>
            <person name="Zhou L."/>
            <person name="Schneider D.J."/>
            <person name="Cartinhour S.W."/>
            <person name="Nelson W.C."/>
            <person name="Weidman J."/>
            <person name="Watkins K."/>
            <person name="Tran K."/>
            <person name="Khouri H."/>
            <person name="Pierson E.A."/>
            <person name="Pierson L.S. III"/>
            <person name="Thomashow L.S."/>
            <person name="Loper J.E."/>
        </authorList>
    </citation>
    <scope>NUCLEOTIDE SEQUENCE [LARGE SCALE GENOMIC DNA]</scope>
    <source>
        <strain>ATCC BAA-477 / NRRL B-23932 / Pf-5</strain>
    </source>
</reference>
<name>MNTP_PSEF5</name>
<sequence>MNPASIIFLAFAMSTDAFAAAVGKGSAMLKPRLLEALRIGLIFGVIEAITPVVGWFIGQAATQWVANWDHWIAFSLLLLLGLHMIYNGTRQQAEAEEEKPRQHGFWLLAVTGLATSIDALAVGVGLAFVNVNIWVAASAIGLATMTMVTLGVMLGRAIGTVMGQRAEVLGGVVLIIVGSRILYEHLSAVA</sequence>
<feature type="chain" id="PRO_0000292538" description="Putative manganese efflux pump MntP">
    <location>
        <begin position="1"/>
        <end position="190"/>
    </location>
</feature>
<feature type="transmembrane region" description="Helical" evidence="1">
    <location>
        <begin position="3"/>
        <end position="23"/>
    </location>
</feature>
<feature type="transmembrane region" description="Helical" evidence="1">
    <location>
        <begin position="39"/>
        <end position="59"/>
    </location>
</feature>
<feature type="transmembrane region" description="Helical" evidence="1">
    <location>
        <begin position="65"/>
        <end position="85"/>
    </location>
</feature>
<feature type="transmembrane region" description="Helical" evidence="1">
    <location>
        <begin position="106"/>
        <end position="128"/>
    </location>
</feature>
<feature type="transmembrane region" description="Helical" evidence="1">
    <location>
        <begin position="133"/>
        <end position="155"/>
    </location>
</feature>
<feature type="transmembrane region" description="Helical" evidence="1">
    <location>
        <begin position="157"/>
        <end position="177"/>
    </location>
</feature>
<keyword id="KW-0997">Cell inner membrane</keyword>
<keyword id="KW-1003">Cell membrane</keyword>
<keyword id="KW-0406">Ion transport</keyword>
<keyword id="KW-0464">Manganese</keyword>
<keyword id="KW-0472">Membrane</keyword>
<keyword id="KW-0812">Transmembrane</keyword>
<keyword id="KW-1133">Transmembrane helix</keyword>
<keyword id="KW-0813">Transport</keyword>